<keyword id="KW-0521">NADP</keyword>
<keyword id="KW-0560">Oxidoreductase</keyword>
<keyword id="KW-1185">Reference proteome</keyword>
<keyword id="KW-0816">Tricarboxylic acid cycle</keyword>
<feature type="chain" id="PRO_0000310701" description="Succinate-semialdehyde dehydrogenase [NADP(+)] 1">
    <location>
        <begin position="1"/>
        <end position="457"/>
    </location>
</feature>
<feature type="active site" evidence="2">
    <location>
        <position position="231"/>
    </location>
</feature>
<feature type="active site" evidence="2">
    <location>
        <position position="265"/>
    </location>
</feature>
<feature type="binding site" evidence="1">
    <location>
        <begin position="209"/>
        <end position="214"/>
    </location>
    <ligand>
        <name>NADP(+)</name>
        <dbReference type="ChEBI" id="CHEBI:58349"/>
    </ligand>
</feature>
<name>GABD1_MYCBO</name>
<gene>
    <name type="primary">gabD1</name>
    <name type="ordered locus">BQ2027_MB0239C</name>
</gene>
<dbReference type="EC" id="1.2.1.16"/>
<dbReference type="EMBL" id="LT708304">
    <property type="protein sequence ID" value="SIT98735.1"/>
    <property type="status" value="ALT_INIT"/>
    <property type="molecule type" value="Genomic_DNA"/>
</dbReference>
<dbReference type="RefSeq" id="WP_003912534.1">
    <property type="nucleotide sequence ID" value="NC_002945.4"/>
</dbReference>
<dbReference type="SMR" id="Q7U2I0"/>
<dbReference type="PATRIC" id="fig|233413.5.peg.266"/>
<dbReference type="Proteomes" id="UP000001419">
    <property type="component" value="Chromosome"/>
</dbReference>
<dbReference type="GO" id="GO:0004030">
    <property type="term" value="F:aldehyde dehydrogenase [NAD(P)+] activity"/>
    <property type="evidence" value="ECO:0007669"/>
    <property type="project" value="InterPro"/>
</dbReference>
<dbReference type="GO" id="GO:0004777">
    <property type="term" value="F:succinate-semialdehyde dehydrogenase (NAD+) activity"/>
    <property type="evidence" value="ECO:0007669"/>
    <property type="project" value="RHEA"/>
</dbReference>
<dbReference type="GO" id="GO:0036243">
    <property type="term" value="F:succinate-semialdehyde dehydrogenase (NADP+) activity"/>
    <property type="evidence" value="ECO:0007669"/>
    <property type="project" value="RHEA"/>
</dbReference>
<dbReference type="GO" id="GO:0006099">
    <property type="term" value="P:tricarboxylic acid cycle"/>
    <property type="evidence" value="ECO:0007669"/>
    <property type="project" value="UniProtKB-KW"/>
</dbReference>
<dbReference type="CDD" id="cd07100">
    <property type="entry name" value="ALDH_SSADH1_GabD1"/>
    <property type="match status" value="1"/>
</dbReference>
<dbReference type="FunFam" id="3.40.309.10:FF:000010">
    <property type="entry name" value="Gamma-aminobutyraldehyde dehydrogenase"/>
    <property type="match status" value="1"/>
</dbReference>
<dbReference type="FunFam" id="3.40.605.10:FF:000012">
    <property type="entry name" value="NAD-dependent succinate-semialdehyde dehydrogenase"/>
    <property type="match status" value="1"/>
</dbReference>
<dbReference type="Gene3D" id="3.40.605.10">
    <property type="entry name" value="Aldehyde Dehydrogenase, Chain A, domain 1"/>
    <property type="match status" value="1"/>
</dbReference>
<dbReference type="Gene3D" id="3.40.309.10">
    <property type="entry name" value="Aldehyde Dehydrogenase, Chain A, domain 2"/>
    <property type="match status" value="1"/>
</dbReference>
<dbReference type="InterPro" id="IPR016161">
    <property type="entry name" value="Ald_DH/histidinol_DH"/>
</dbReference>
<dbReference type="InterPro" id="IPR016163">
    <property type="entry name" value="Ald_DH_C"/>
</dbReference>
<dbReference type="InterPro" id="IPR016160">
    <property type="entry name" value="Ald_DH_CS_CYS"/>
</dbReference>
<dbReference type="InterPro" id="IPR016162">
    <property type="entry name" value="Ald_DH_N"/>
</dbReference>
<dbReference type="InterPro" id="IPR015590">
    <property type="entry name" value="Aldehyde_DH_dom"/>
</dbReference>
<dbReference type="InterPro" id="IPR044148">
    <property type="entry name" value="ALDH_GabD1-like"/>
</dbReference>
<dbReference type="InterPro" id="IPR047110">
    <property type="entry name" value="GABD/Sad-like"/>
</dbReference>
<dbReference type="NCBIfam" id="NF006915">
    <property type="entry name" value="PRK09406.1"/>
    <property type="match status" value="1"/>
</dbReference>
<dbReference type="PANTHER" id="PTHR43217">
    <property type="entry name" value="SUCCINATE SEMIALDEHYDE DEHYDROGENASE [NAD(P)+] SAD"/>
    <property type="match status" value="1"/>
</dbReference>
<dbReference type="PANTHER" id="PTHR43217:SF1">
    <property type="entry name" value="SUCCINATE SEMIALDEHYDE DEHYDROGENASE [NAD(P)+] SAD"/>
    <property type="match status" value="1"/>
</dbReference>
<dbReference type="Pfam" id="PF00171">
    <property type="entry name" value="Aldedh"/>
    <property type="match status" value="1"/>
</dbReference>
<dbReference type="SUPFAM" id="SSF53720">
    <property type="entry name" value="ALDH-like"/>
    <property type="match status" value="1"/>
</dbReference>
<dbReference type="PROSITE" id="PS00070">
    <property type="entry name" value="ALDEHYDE_DEHYDR_CYS"/>
    <property type="match status" value="1"/>
</dbReference>
<organism>
    <name type="scientific">Mycobacterium bovis (strain ATCC BAA-935 / AF2122/97)</name>
    <dbReference type="NCBI Taxonomy" id="233413"/>
    <lineage>
        <taxon>Bacteria</taxon>
        <taxon>Bacillati</taxon>
        <taxon>Actinomycetota</taxon>
        <taxon>Actinomycetes</taxon>
        <taxon>Mycobacteriales</taxon>
        <taxon>Mycobacteriaceae</taxon>
        <taxon>Mycobacterium</taxon>
        <taxon>Mycobacterium tuberculosis complex</taxon>
    </lineage>
</organism>
<protein>
    <recommendedName>
        <fullName>Succinate-semialdehyde dehydrogenase [NADP(+)] 1</fullName>
        <shortName>SSADH 1</shortName>
        <shortName>SSDH 1</shortName>
        <ecNumber>1.2.1.16</ecNumber>
    </recommendedName>
</protein>
<comment type="function">
    <text evidence="1">Catalyzes the NADP(+)-dependent oxidation of succinate semialdehyde to succinate. It is believed to be the main source of succinate semialdehyde dehydrogenase activity in Mycobacterium (By similarity).</text>
</comment>
<comment type="catalytic activity">
    <reaction>
        <text>succinate semialdehyde + NAD(+) + H2O = succinate + NADH + 2 H(+)</text>
        <dbReference type="Rhea" id="RHEA:13217"/>
        <dbReference type="ChEBI" id="CHEBI:15377"/>
        <dbReference type="ChEBI" id="CHEBI:15378"/>
        <dbReference type="ChEBI" id="CHEBI:30031"/>
        <dbReference type="ChEBI" id="CHEBI:57540"/>
        <dbReference type="ChEBI" id="CHEBI:57706"/>
        <dbReference type="ChEBI" id="CHEBI:57945"/>
        <dbReference type="EC" id="1.2.1.16"/>
    </reaction>
</comment>
<comment type="catalytic activity">
    <reaction>
        <text>succinate semialdehyde + NADP(+) + H2O = succinate + NADPH + 2 H(+)</text>
        <dbReference type="Rhea" id="RHEA:13213"/>
        <dbReference type="ChEBI" id="CHEBI:15377"/>
        <dbReference type="ChEBI" id="CHEBI:15378"/>
        <dbReference type="ChEBI" id="CHEBI:30031"/>
        <dbReference type="ChEBI" id="CHEBI:57706"/>
        <dbReference type="ChEBI" id="CHEBI:57783"/>
        <dbReference type="ChEBI" id="CHEBI:58349"/>
        <dbReference type="EC" id="1.2.1.16"/>
    </reaction>
</comment>
<comment type="similarity">
    <text evidence="3">Belongs to the aldehyde dehydrogenase family.</text>
</comment>
<comment type="sequence caution" evidence="3">
    <conflict type="erroneous initiation">
        <sequence resource="EMBL-CDS" id="SIT98735"/>
    </conflict>
    <text>Extended N-terminus.</text>
</comment>
<sequence length="457" mass="48545">MPIATINPATGETVKTFTAATDDEVDAAIARAHRRFADYRQTSFAQRARWANATADLLEAEADQAAAMMTLEMGKTLAAAKAEALKCAKGFRYYAENAEALLADEPADAAKVGASAAYGRYQPLGVILAVMPWNFPLWQAVRFAAPALMAGNVGLLKHASNVPQCALYLADVIARGGFPDGCFQTLLVSSGAVEAILRDPRVAAATLTGSEPAGQSVGAIAGNEIKPTVLELGGSDPFIVMPSADLDAAVSTAVTGRVQNNGQSCIAAKRFIVHADIYDDFVDKFVARMAALRVGDPTDPDTDVGPLATEQGRNEVAKQVEDAAAAGAVIRCGGKRLDRPGWFYPPTVITDISKDMALYTEEVFGPVASVFRAANIDEAVEIANATTFGLGSNAWTRDETEQRRFIDDIVAGQVFINGMTVSYPELPFGGVKRSGYGRELSAHGIREFCNIKTVWIA</sequence>
<proteinExistence type="inferred from homology"/>
<accession>Q7U2I0</accession>
<accession>A0A1R3XUW7</accession>
<accession>X2BEB3</accession>
<reference key="1">
    <citation type="journal article" date="2003" name="Proc. Natl. Acad. Sci. U.S.A.">
        <title>The complete genome sequence of Mycobacterium bovis.</title>
        <authorList>
            <person name="Garnier T."/>
            <person name="Eiglmeier K."/>
            <person name="Camus J.-C."/>
            <person name="Medina N."/>
            <person name="Mansoor H."/>
            <person name="Pryor M."/>
            <person name="Duthoy S."/>
            <person name="Grondin S."/>
            <person name="Lacroix C."/>
            <person name="Monsempe C."/>
            <person name="Simon S."/>
            <person name="Harris B."/>
            <person name="Atkin R."/>
            <person name="Doggett J."/>
            <person name="Mayes R."/>
            <person name="Keating L."/>
            <person name="Wheeler P.R."/>
            <person name="Parkhill J."/>
            <person name="Barrell B.G."/>
            <person name="Cole S.T."/>
            <person name="Gordon S.V."/>
            <person name="Hewinson R.G."/>
        </authorList>
    </citation>
    <scope>NUCLEOTIDE SEQUENCE [LARGE SCALE GENOMIC DNA]</scope>
    <source>
        <strain>ATCC BAA-935 / AF2122/97</strain>
    </source>
</reference>
<reference key="2">
    <citation type="journal article" date="2017" name="Genome Announc.">
        <title>Updated reference genome sequence and annotation of Mycobacterium bovis AF2122/97.</title>
        <authorList>
            <person name="Malone K.M."/>
            <person name="Farrell D."/>
            <person name="Stuber T.P."/>
            <person name="Schubert O.T."/>
            <person name="Aebersold R."/>
            <person name="Robbe-Austerman S."/>
            <person name="Gordon S.V."/>
        </authorList>
    </citation>
    <scope>NUCLEOTIDE SEQUENCE [LARGE SCALE GENOMIC DNA]</scope>
    <scope>GENOME REANNOTATION</scope>
    <source>
        <strain>ATCC BAA-935 / AF2122/97</strain>
    </source>
</reference>
<evidence type="ECO:0000250" key="1"/>
<evidence type="ECO:0000255" key="2">
    <source>
        <dbReference type="PROSITE-ProRule" id="PRU10008"/>
    </source>
</evidence>
<evidence type="ECO:0000305" key="3"/>